<organism>
    <name type="scientific">Salmonella gallinarum (strain 287/91 / NCTC 13346)</name>
    <dbReference type="NCBI Taxonomy" id="550538"/>
    <lineage>
        <taxon>Bacteria</taxon>
        <taxon>Pseudomonadati</taxon>
        <taxon>Pseudomonadota</taxon>
        <taxon>Gammaproteobacteria</taxon>
        <taxon>Enterobacterales</taxon>
        <taxon>Enterobacteriaceae</taxon>
        <taxon>Salmonella</taxon>
    </lineage>
</organism>
<proteinExistence type="inferred from homology"/>
<sequence>MELLLLSNSTLPGKAWLEHALPLIANQLNGRRSAVFIPFAGVTQTWDEYTDKTAEVLAPLGINVTGIHRVADPLAAIEKAEIIIVGGGNTFQLMKESRERGLLAPMADRVKRGALYIGWSAGANLACPTIRTTNDMPIVDPNGFDALDLFPLQINPHFTNALPEGHKGETREQRIRELLVVAPELTVIGLPEGNWIQVSNGQAVPGGPNTTWVFKAGEEAVALEAVIAFNPWPH</sequence>
<name>PEPE_SALG2</name>
<gene>
    <name evidence="1" type="primary">pepE</name>
    <name type="ordered locus">SG4050</name>
</gene>
<accession>B5R7Q9</accession>
<comment type="function">
    <text evidence="1">Hydrolyzes dipeptides containing N-terminal aspartate residues. May play a role in allowing the cell to use peptide aspartate to spare carbon otherwise required for the synthesis of the aspartate family of amino acids.</text>
</comment>
<comment type="catalytic activity">
    <reaction evidence="1">
        <text>Dipeptidase E catalyzes the hydrolysis of dipeptides Asp-|-Xaa. It does not act on peptides with N-terminal Glu, Asn or Gln, nor does it cleave isoaspartyl peptides.</text>
        <dbReference type="EC" id="3.4.13.21"/>
    </reaction>
</comment>
<comment type="subcellular location">
    <subcellularLocation>
        <location evidence="1">Cytoplasm</location>
    </subcellularLocation>
</comment>
<comment type="similarity">
    <text evidence="1">Belongs to the peptidase S51 family.</text>
</comment>
<reference key="1">
    <citation type="journal article" date="2008" name="Genome Res.">
        <title>Comparative genome analysis of Salmonella enteritidis PT4 and Salmonella gallinarum 287/91 provides insights into evolutionary and host adaptation pathways.</title>
        <authorList>
            <person name="Thomson N.R."/>
            <person name="Clayton D.J."/>
            <person name="Windhorst D."/>
            <person name="Vernikos G."/>
            <person name="Davidson S."/>
            <person name="Churcher C."/>
            <person name="Quail M.A."/>
            <person name="Stevens M."/>
            <person name="Jones M.A."/>
            <person name="Watson M."/>
            <person name="Barron A."/>
            <person name="Layton A."/>
            <person name="Pickard D."/>
            <person name="Kingsley R.A."/>
            <person name="Bignell A."/>
            <person name="Clark L."/>
            <person name="Harris B."/>
            <person name="Ormond D."/>
            <person name="Abdellah Z."/>
            <person name="Brooks K."/>
            <person name="Cherevach I."/>
            <person name="Chillingworth T."/>
            <person name="Woodward J."/>
            <person name="Norberczak H."/>
            <person name="Lord A."/>
            <person name="Arrowsmith C."/>
            <person name="Jagels K."/>
            <person name="Moule S."/>
            <person name="Mungall K."/>
            <person name="Saunders M."/>
            <person name="Whitehead S."/>
            <person name="Chabalgoity J.A."/>
            <person name="Maskell D."/>
            <person name="Humphreys T."/>
            <person name="Roberts M."/>
            <person name="Barrow P.A."/>
            <person name="Dougan G."/>
            <person name="Parkhill J."/>
        </authorList>
    </citation>
    <scope>NUCLEOTIDE SEQUENCE [LARGE SCALE GENOMIC DNA]</scope>
    <source>
        <strain>287/91 / NCTC 13346</strain>
    </source>
</reference>
<feature type="chain" id="PRO_1000127249" description="Peptidase E">
    <location>
        <begin position="1"/>
        <end position="234"/>
    </location>
</feature>
<feature type="active site" description="Charge relay system" evidence="1">
    <location>
        <position position="120"/>
    </location>
</feature>
<feature type="active site" description="Charge relay system" evidence="1">
    <location>
        <position position="135"/>
    </location>
</feature>
<feature type="active site" description="Charge relay system" evidence="1">
    <location>
        <position position="157"/>
    </location>
</feature>
<protein>
    <recommendedName>
        <fullName evidence="1">Peptidase E</fullName>
        <ecNumber evidence="1">3.4.13.21</ecNumber>
    </recommendedName>
    <alternativeName>
        <fullName evidence="1">Alpha-aspartyl dipeptidase</fullName>
    </alternativeName>
    <alternativeName>
        <fullName evidence="1">Asp-specific dipeptidase</fullName>
    </alternativeName>
    <alternativeName>
        <fullName evidence="1">Dipeptidase E</fullName>
    </alternativeName>
</protein>
<dbReference type="EC" id="3.4.13.21" evidence="1"/>
<dbReference type="EMBL" id="AM933173">
    <property type="protein sequence ID" value="CAR39820.1"/>
    <property type="molecule type" value="Genomic_DNA"/>
</dbReference>
<dbReference type="RefSeq" id="WP_000421784.1">
    <property type="nucleotide sequence ID" value="NC_011274.1"/>
</dbReference>
<dbReference type="SMR" id="B5R7Q9"/>
<dbReference type="MEROPS" id="S51.001"/>
<dbReference type="KEGG" id="seg:SG4050"/>
<dbReference type="HOGENOM" id="CLU_071689_0_0_6"/>
<dbReference type="Proteomes" id="UP000008321">
    <property type="component" value="Chromosome"/>
</dbReference>
<dbReference type="GO" id="GO:0005737">
    <property type="term" value="C:cytoplasm"/>
    <property type="evidence" value="ECO:0007669"/>
    <property type="project" value="UniProtKB-SubCell"/>
</dbReference>
<dbReference type="GO" id="GO:0016805">
    <property type="term" value="F:dipeptidase activity"/>
    <property type="evidence" value="ECO:0007669"/>
    <property type="project" value="UniProtKB-UniRule"/>
</dbReference>
<dbReference type="GO" id="GO:0008236">
    <property type="term" value="F:serine-type peptidase activity"/>
    <property type="evidence" value="ECO:0007669"/>
    <property type="project" value="UniProtKB-KW"/>
</dbReference>
<dbReference type="GO" id="GO:0006508">
    <property type="term" value="P:proteolysis"/>
    <property type="evidence" value="ECO:0007669"/>
    <property type="project" value="UniProtKB-UniRule"/>
</dbReference>
<dbReference type="CDD" id="cd03146">
    <property type="entry name" value="GAT1_Peptidase_E"/>
    <property type="match status" value="1"/>
</dbReference>
<dbReference type="FunFam" id="3.40.50.880:FF:000007">
    <property type="entry name" value="Peptidase E"/>
    <property type="match status" value="1"/>
</dbReference>
<dbReference type="Gene3D" id="3.40.50.880">
    <property type="match status" value="1"/>
</dbReference>
<dbReference type="HAMAP" id="MF_00510">
    <property type="entry name" value="Peptidase_E"/>
    <property type="match status" value="1"/>
</dbReference>
<dbReference type="InterPro" id="IPR029062">
    <property type="entry name" value="Class_I_gatase-like"/>
</dbReference>
<dbReference type="InterPro" id="IPR005320">
    <property type="entry name" value="Peptidase_S51"/>
</dbReference>
<dbReference type="InterPro" id="IPR023172">
    <property type="entry name" value="Peptidase_S51_dipeptidase-E"/>
</dbReference>
<dbReference type="NCBIfam" id="NF003642">
    <property type="entry name" value="PRK05282.1"/>
    <property type="match status" value="1"/>
</dbReference>
<dbReference type="PANTHER" id="PTHR20842:SF0">
    <property type="entry name" value="ALPHA-ASPARTYL DIPEPTIDASE"/>
    <property type="match status" value="1"/>
</dbReference>
<dbReference type="PANTHER" id="PTHR20842">
    <property type="entry name" value="PROTEASE S51 ALPHA-ASPARTYL DIPEPTIDASE"/>
    <property type="match status" value="1"/>
</dbReference>
<dbReference type="Pfam" id="PF03575">
    <property type="entry name" value="Peptidase_S51"/>
    <property type="match status" value="1"/>
</dbReference>
<dbReference type="SUPFAM" id="SSF52317">
    <property type="entry name" value="Class I glutamine amidotransferase-like"/>
    <property type="match status" value="1"/>
</dbReference>
<evidence type="ECO:0000255" key="1">
    <source>
        <dbReference type="HAMAP-Rule" id="MF_00510"/>
    </source>
</evidence>
<keyword id="KW-0963">Cytoplasm</keyword>
<keyword id="KW-0224">Dipeptidase</keyword>
<keyword id="KW-0378">Hydrolase</keyword>
<keyword id="KW-0645">Protease</keyword>
<keyword id="KW-0720">Serine protease</keyword>